<evidence type="ECO:0000255" key="1">
    <source>
        <dbReference type="HAMAP-Rule" id="MF_01553"/>
    </source>
</evidence>
<proteinExistence type="inferred from homology"/>
<accession>A7Z465</accession>
<gene>
    <name evidence="1" type="primary">rpoY</name>
    <name type="ordered locus">RBAM_014280</name>
</gene>
<name>RPOY_BACVZ</name>
<keyword id="KW-0240">DNA-directed RNA polymerase</keyword>
<keyword id="KW-0548">Nucleotidyltransferase</keyword>
<keyword id="KW-0804">Transcription</keyword>
<keyword id="KW-0808">Transferase</keyword>
<sequence length="69" mass="8267">MIYKVFYQEKADEVPVREKTDSLYIEGVSERDVRTKLKDQKYNIEFVQPVDGAFLEYEKQSENFKVLEL</sequence>
<reference key="1">
    <citation type="journal article" date="2007" name="Nat. Biotechnol.">
        <title>Comparative analysis of the complete genome sequence of the plant growth-promoting bacterium Bacillus amyloliquefaciens FZB42.</title>
        <authorList>
            <person name="Chen X.H."/>
            <person name="Koumoutsi A."/>
            <person name="Scholz R."/>
            <person name="Eisenreich A."/>
            <person name="Schneider K."/>
            <person name="Heinemeyer I."/>
            <person name="Morgenstern B."/>
            <person name="Voss B."/>
            <person name="Hess W.R."/>
            <person name="Reva O."/>
            <person name="Junge H."/>
            <person name="Voigt B."/>
            <person name="Jungblut P.R."/>
            <person name="Vater J."/>
            <person name="Suessmuth R."/>
            <person name="Liesegang H."/>
            <person name="Strittmatter A."/>
            <person name="Gottschalk G."/>
            <person name="Borriss R."/>
        </authorList>
    </citation>
    <scope>NUCLEOTIDE SEQUENCE [LARGE SCALE GENOMIC DNA]</scope>
    <source>
        <strain>DSM 23117 / BGSC 10A6 / LMG 26770 / FZB42</strain>
    </source>
</reference>
<organism>
    <name type="scientific">Bacillus velezensis (strain DSM 23117 / BGSC 10A6 / LMG 26770 / FZB42)</name>
    <name type="common">Bacillus amyloliquefaciens subsp. plantarum</name>
    <dbReference type="NCBI Taxonomy" id="326423"/>
    <lineage>
        <taxon>Bacteria</taxon>
        <taxon>Bacillati</taxon>
        <taxon>Bacillota</taxon>
        <taxon>Bacilli</taxon>
        <taxon>Bacillales</taxon>
        <taxon>Bacillaceae</taxon>
        <taxon>Bacillus</taxon>
        <taxon>Bacillus amyloliquefaciens group</taxon>
    </lineage>
</organism>
<protein>
    <recommendedName>
        <fullName evidence="1">DNA-directed RNA polymerase subunit epsilon</fullName>
        <shortName evidence="1">RNAP epsilon subunit</shortName>
        <ecNumber evidence="1">2.7.7.6</ecNumber>
    </recommendedName>
    <alternativeName>
        <fullName evidence="1">RNA polymerase epsilon subunit</fullName>
    </alternativeName>
    <alternativeName>
        <fullName evidence="1">Transcriptase subunit epsilon</fullName>
    </alternativeName>
</protein>
<feature type="chain" id="PRO_1000087751" description="DNA-directed RNA polymerase subunit epsilon">
    <location>
        <begin position="1"/>
        <end position="69"/>
    </location>
</feature>
<dbReference type="EC" id="2.7.7.6" evidence="1"/>
<dbReference type="EMBL" id="CP000560">
    <property type="protein sequence ID" value="ABS73791.1"/>
    <property type="molecule type" value="Genomic_DNA"/>
</dbReference>
<dbReference type="RefSeq" id="WP_003154548.1">
    <property type="nucleotide sequence ID" value="NC_009725.2"/>
</dbReference>
<dbReference type="SMR" id="A7Z465"/>
<dbReference type="GeneID" id="93080562"/>
<dbReference type="KEGG" id="bay:RBAM_014280"/>
<dbReference type="HOGENOM" id="CLU_187518_1_0_9"/>
<dbReference type="Proteomes" id="UP000001120">
    <property type="component" value="Chromosome"/>
</dbReference>
<dbReference type="GO" id="GO:0000428">
    <property type="term" value="C:DNA-directed RNA polymerase complex"/>
    <property type="evidence" value="ECO:0007669"/>
    <property type="project" value="UniProtKB-KW"/>
</dbReference>
<dbReference type="GO" id="GO:0003677">
    <property type="term" value="F:DNA binding"/>
    <property type="evidence" value="ECO:0007669"/>
    <property type="project" value="UniProtKB-UniRule"/>
</dbReference>
<dbReference type="GO" id="GO:0003899">
    <property type="term" value="F:DNA-directed RNA polymerase activity"/>
    <property type="evidence" value="ECO:0007669"/>
    <property type="project" value="UniProtKB-UniRule"/>
</dbReference>
<dbReference type="GO" id="GO:0006351">
    <property type="term" value="P:DNA-templated transcription"/>
    <property type="evidence" value="ECO:0007669"/>
    <property type="project" value="UniProtKB-UniRule"/>
</dbReference>
<dbReference type="Gene3D" id="3.10.20.730">
    <property type="entry name" value="RNAP, epsilon subunit-like"/>
    <property type="match status" value="1"/>
</dbReference>
<dbReference type="HAMAP" id="MF_01553">
    <property type="entry name" value="RNApol_bact_RpoY"/>
    <property type="match status" value="1"/>
</dbReference>
<dbReference type="InterPro" id="IPR009907">
    <property type="entry name" value="RpoY"/>
</dbReference>
<dbReference type="NCBIfam" id="NF010188">
    <property type="entry name" value="PRK13667.1"/>
    <property type="match status" value="1"/>
</dbReference>
<dbReference type="Pfam" id="PF07288">
    <property type="entry name" value="RpoY"/>
    <property type="match status" value="1"/>
</dbReference>
<comment type="function">
    <text evidence="1">A non-essential component of RNA polymerase (RNAP).</text>
</comment>
<comment type="catalytic activity">
    <reaction evidence="1">
        <text>RNA(n) + a ribonucleoside 5'-triphosphate = RNA(n+1) + diphosphate</text>
        <dbReference type="Rhea" id="RHEA:21248"/>
        <dbReference type="Rhea" id="RHEA-COMP:14527"/>
        <dbReference type="Rhea" id="RHEA-COMP:17342"/>
        <dbReference type="ChEBI" id="CHEBI:33019"/>
        <dbReference type="ChEBI" id="CHEBI:61557"/>
        <dbReference type="ChEBI" id="CHEBI:140395"/>
        <dbReference type="EC" id="2.7.7.6"/>
    </reaction>
</comment>
<comment type="subunit">
    <text evidence="1">RNAP is composed of a core of 2 alpha, a beta and a beta' subunit. The core is associated with a delta subunit, and at least one of epsilon or omega. When a sigma factor is associated with the core the holoenzyme is formed, which can initiate transcription.</text>
</comment>
<comment type="similarity">
    <text evidence="1">Belongs to the RNA polymerase subunit epsilon family.</text>
</comment>